<proteinExistence type="inferred from homology"/>
<feature type="chain" id="PRO_0000229967" description="Tetraacyldisaccharide 4'-kinase">
    <location>
        <begin position="1"/>
        <end position="338"/>
    </location>
</feature>
<feature type="binding site" evidence="1">
    <location>
        <begin position="61"/>
        <end position="68"/>
    </location>
    <ligand>
        <name>ATP</name>
        <dbReference type="ChEBI" id="CHEBI:30616"/>
    </ligand>
</feature>
<protein>
    <recommendedName>
        <fullName evidence="1">Tetraacyldisaccharide 4'-kinase</fullName>
        <ecNumber evidence="1">2.7.1.130</ecNumber>
    </recommendedName>
    <alternativeName>
        <fullName evidence="1">Lipid A 4'-kinase</fullName>
    </alternativeName>
</protein>
<accession>Q3J7R7</accession>
<keyword id="KW-0067">ATP-binding</keyword>
<keyword id="KW-0418">Kinase</keyword>
<keyword id="KW-0441">Lipid A biosynthesis</keyword>
<keyword id="KW-0444">Lipid biosynthesis</keyword>
<keyword id="KW-0443">Lipid metabolism</keyword>
<keyword id="KW-0547">Nucleotide-binding</keyword>
<keyword id="KW-1185">Reference proteome</keyword>
<keyword id="KW-0808">Transferase</keyword>
<evidence type="ECO:0000255" key="1">
    <source>
        <dbReference type="HAMAP-Rule" id="MF_00409"/>
    </source>
</evidence>
<organism>
    <name type="scientific">Nitrosococcus oceani (strain ATCC 19707 / BCRC 17464 / JCM 30415 / NCIMB 11848 / C-107)</name>
    <dbReference type="NCBI Taxonomy" id="323261"/>
    <lineage>
        <taxon>Bacteria</taxon>
        <taxon>Pseudomonadati</taxon>
        <taxon>Pseudomonadota</taxon>
        <taxon>Gammaproteobacteria</taxon>
        <taxon>Chromatiales</taxon>
        <taxon>Chromatiaceae</taxon>
        <taxon>Nitrosococcus</taxon>
    </lineage>
</organism>
<dbReference type="EC" id="2.7.1.130" evidence="1"/>
<dbReference type="EMBL" id="CP000127">
    <property type="protein sequence ID" value="ABA59129.1"/>
    <property type="molecule type" value="Genomic_DNA"/>
</dbReference>
<dbReference type="RefSeq" id="WP_002813590.1">
    <property type="nucleotide sequence ID" value="NC_007484.1"/>
</dbReference>
<dbReference type="SMR" id="Q3J7R7"/>
<dbReference type="FunCoup" id="Q3J7R7">
    <property type="interactions" value="237"/>
</dbReference>
<dbReference type="STRING" id="323261.Noc_2676"/>
<dbReference type="KEGG" id="noc:Noc_2676"/>
<dbReference type="eggNOG" id="COG1663">
    <property type="taxonomic scope" value="Bacteria"/>
</dbReference>
<dbReference type="HOGENOM" id="CLU_038816_2_0_6"/>
<dbReference type="InParanoid" id="Q3J7R7"/>
<dbReference type="UniPathway" id="UPA00359">
    <property type="reaction ID" value="UER00482"/>
</dbReference>
<dbReference type="Proteomes" id="UP000006838">
    <property type="component" value="Chromosome"/>
</dbReference>
<dbReference type="GO" id="GO:0005886">
    <property type="term" value="C:plasma membrane"/>
    <property type="evidence" value="ECO:0007669"/>
    <property type="project" value="TreeGrafter"/>
</dbReference>
<dbReference type="GO" id="GO:0005524">
    <property type="term" value="F:ATP binding"/>
    <property type="evidence" value="ECO:0007669"/>
    <property type="project" value="UniProtKB-UniRule"/>
</dbReference>
<dbReference type="GO" id="GO:0009029">
    <property type="term" value="F:tetraacyldisaccharide 4'-kinase activity"/>
    <property type="evidence" value="ECO:0007669"/>
    <property type="project" value="UniProtKB-UniRule"/>
</dbReference>
<dbReference type="GO" id="GO:0009245">
    <property type="term" value="P:lipid A biosynthetic process"/>
    <property type="evidence" value="ECO:0007669"/>
    <property type="project" value="UniProtKB-UniRule"/>
</dbReference>
<dbReference type="GO" id="GO:0009244">
    <property type="term" value="P:lipopolysaccharide core region biosynthetic process"/>
    <property type="evidence" value="ECO:0007669"/>
    <property type="project" value="TreeGrafter"/>
</dbReference>
<dbReference type="HAMAP" id="MF_00409">
    <property type="entry name" value="LpxK"/>
    <property type="match status" value="1"/>
</dbReference>
<dbReference type="InterPro" id="IPR003758">
    <property type="entry name" value="LpxK"/>
</dbReference>
<dbReference type="InterPro" id="IPR027417">
    <property type="entry name" value="P-loop_NTPase"/>
</dbReference>
<dbReference type="NCBIfam" id="TIGR00682">
    <property type="entry name" value="lpxK"/>
    <property type="match status" value="1"/>
</dbReference>
<dbReference type="PANTHER" id="PTHR42724">
    <property type="entry name" value="TETRAACYLDISACCHARIDE 4'-KINASE"/>
    <property type="match status" value="1"/>
</dbReference>
<dbReference type="PANTHER" id="PTHR42724:SF1">
    <property type="entry name" value="TETRAACYLDISACCHARIDE 4'-KINASE, MITOCHONDRIAL-RELATED"/>
    <property type="match status" value="1"/>
</dbReference>
<dbReference type="Pfam" id="PF02606">
    <property type="entry name" value="LpxK"/>
    <property type="match status" value="1"/>
</dbReference>
<dbReference type="SUPFAM" id="SSF52540">
    <property type="entry name" value="P-loop containing nucleoside triphosphate hydrolases"/>
    <property type="match status" value="1"/>
</dbReference>
<name>LPXK_NITOC</name>
<comment type="function">
    <text evidence="1">Transfers the gamma-phosphate of ATP to the 4'-position of a tetraacyldisaccharide 1-phosphate intermediate (termed DS-1-P) to form tetraacyldisaccharide 1,4'-bis-phosphate (lipid IVA).</text>
</comment>
<comment type="catalytic activity">
    <reaction evidence="1">
        <text>a lipid A disaccharide + ATP = a lipid IVA + ADP + H(+)</text>
        <dbReference type="Rhea" id="RHEA:67840"/>
        <dbReference type="ChEBI" id="CHEBI:15378"/>
        <dbReference type="ChEBI" id="CHEBI:30616"/>
        <dbReference type="ChEBI" id="CHEBI:176343"/>
        <dbReference type="ChEBI" id="CHEBI:176425"/>
        <dbReference type="ChEBI" id="CHEBI:456216"/>
        <dbReference type="EC" id="2.7.1.130"/>
    </reaction>
</comment>
<comment type="pathway">
    <text evidence="1">Glycolipid biosynthesis; lipid IV(A) biosynthesis; lipid IV(A) from (3R)-3-hydroxytetradecanoyl-[acyl-carrier-protein] and UDP-N-acetyl-alpha-D-glucosamine: step 6/6.</text>
</comment>
<comment type="similarity">
    <text evidence="1">Belongs to the LpxK family.</text>
</comment>
<sequence length="338" mass="37722">MSDYSSLILRYWYSNQPSRWLLTPLSGLFQLAVKIRQWAYTQGLFHTHILPLPVLVIGNLTLGGTGKTPLVIWLAQFLRQHGYRPGLISRGYGGHAQNYPQQVYPDSDPHLVGDEAVLLARRTGCPLVVGPDRVAASHALLAHSDCNVLLSDDGLQHYALGRDIEILVVDGVRRFGNAHCLPAGPLREPLSRLRTVDLVVTNGMPQGGEFAMYSQLQDARHIKDGTLRPLKKFRRTKLHGVAGIGNPERFFSQLRALELTIQPHPFPDHYGFQSEDLAFADQQPVLMTEKDAVKCIRFARDNYWYVPMDVSLPASFGAQVLSLLQQAAKKKLNIETTG</sequence>
<reference key="1">
    <citation type="journal article" date="2006" name="Appl. Environ. Microbiol.">
        <title>Complete genome sequence of the marine, chemolithoautotrophic, ammonia-oxidizing bacterium Nitrosococcus oceani ATCC 19707.</title>
        <authorList>
            <person name="Klotz M.G."/>
            <person name="Arp D.J."/>
            <person name="Chain P.S.G."/>
            <person name="El-Sheikh A.F."/>
            <person name="Hauser L.J."/>
            <person name="Hommes N.G."/>
            <person name="Larimer F.W."/>
            <person name="Malfatti S.A."/>
            <person name="Norton J.M."/>
            <person name="Poret-Peterson A.T."/>
            <person name="Vergez L.M."/>
            <person name="Ward B.B."/>
        </authorList>
    </citation>
    <scope>NUCLEOTIDE SEQUENCE [LARGE SCALE GENOMIC DNA]</scope>
    <source>
        <strain>ATCC 19707 / BCRC 17464 / JCM 30415 / NCIMB 11848 / C-107</strain>
    </source>
</reference>
<gene>
    <name evidence="1" type="primary">lpxK</name>
    <name type="ordered locus">Noc_2676</name>
</gene>